<protein>
    <recommendedName>
        <fullName evidence="3">C2H2-type transcription factor MSN2</fullName>
    </recommendedName>
</protein>
<reference key="1">
    <citation type="journal article" date="2011" name="PLoS Pathog.">
        <title>Genomic and proteomic analyses of the fungus Arthrobotrys oligospora provide insights into nematode-trap formation.</title>
        <authorList>
            <person name="Yang J."/>
            <person name="Wang L."/>
            <person name="Ji X."/>
            <person name="Feng Y."/>
            <person name="Li X."/>
            <person name="Zou C."/>
            <person name="Xu J."/>
            <person name="Ren Y."/>
            <person name="Mi Q."/>
            <person name="Wu J."/>
            <person name="Liu S."/>
            <person name="Liu Y."/>
            <person name="Huang X."/>
            <person name="Wang H."/>
            <person name="Niu X."/>
            <person name="Li J."/>
            <person name="Liang L."/>
            <person name="Luo Y."/>
            <person name="Ji K."/>
            <person name="Zhou W."/>
            <person name="Yu Z."/>
            <person name="Li G."/>
            <person name="Liu Y."/>
            <person name="Li L."/>
            <person name="Qiao M."/>
            <person name="Feng L."/>
            <person name="Zhang K.-Q."/>
        </authorList>
    </citation>
    <scope>NUCLEOTIDE SEQUENCE [LARGE SCALE GENOMIC DNA]</scope>
    <source>
        <strain>ATCC 24927 / CBS 115.81 / DSM 1491</strain>
    </source>
</reference>
<reference key="2">
    <citation type="journal article" date="2025" name="J. Adv. Res.">
        <title>Identification of a transcription factor AoMsn2 of the Hog1 signaling pathway contributes to fungal growth, development and pathogenicity in Arthrobotrys oligospora.</title>
        <authorList>
            <person name="Liu Q."/>
            <person name="Jiang K."/>
            <person name="Duan S."/>
            <person name="Zhao N."/>
            <person name="Shen Y."/>
            <person name="Zhu L."/>
            <person name="Zhang K.Q."/>
            <person name="Yang J."/>
        </authorList>
    </citation>
    <scope>FUNCTION</scope>
    <scope>DISRUPTION PHENOTYPE</scope>
</reference>
<dbReference type="EMBL" id="ADOT01000124">
    <property type="protein sequence ID" value="EGX50251.1"/>
    <property type="molecule type" value="Genomic_DNA"/>
</dbReference>
<dbReference type="RefSeq" id="XP_011121071.1">
    <property type="nucleotide sequence ID" value="XM_011122769.1"/>
</dbReference>
<dbReference type="STRING" id="756982.G1X9A9"/>
<dbReference type="GeneID" id="22891972"/>
<dbReference type="eggNOG" id="KOG1721">
    <property type="taxonomic scope" value="Eukaryota"/>
</dbReference>
<dbReference type="HOGENOM" id="CLU_030977_1_0_1"/>
<dbReference type="InParanoid" id="G1X9A9"/>
<dbReference type="OMA" id="HGWSSEE"/>
<dbReference type="OrthoDB" id="1891470at4890"/>
<dbReference type="Proteomes" id="UP000008784">
    <property type="component" value="Unassembled WGS sequence"/>
</dbReference>
<dbReference type="GO" id="GO:0005634">
    <property type="term" value="C:nucleus"/>
    <property type="evidence" value="ECO:0007669"/>
    <property type="project" value="UniProtKB-SubCell"/>
</dbReference>
<dbReference type="GO" id="GO:0003700">
    <property type="term" value="F:DNA-binding transcription factor activity"/>
    <property type="evidence" value="ECO:0007669"/>
    <property type="project" value="TreeGrafter"/>
</dbReference>
<dbReference type="GO" id="GO:0000978">
    <property type="term" value="F:RNA polymerase II cis-regulatory region sequence-specific DNA binding"/>
    <property type="evidence" value="ECO:0007669"/>
    <property type="project" value="TreeGrafter"/>
</dbReference>
<dbReference type="GO" id="GO:0008270">
    <property type="term" value="F:zinc ion binding"/>
    <property type="evidence" value="ECO:0007669"/>
    <property type="project" value="UniProtKB-KW"/>
</dbReference>
<dbReference type="GO" id="GO:0006357">
    <property type="term" value="P:regulation of transcription by RNA polymerase II"/>
    <property type="evidence" value="ECO:0007669"/>
    <property type="project" value="TreeGrafter"/>
</dbReference>
<dbReference type="FunFam" id="3.30.160.60:FF:000141">
    <property type="entry name" value="C2H2 zinc finger protein"/>
    <property type="match status" value="1"/>
</dbReference>
<dbReference type="FunFam" id="3.30.160.60:FF:000027">
    <property type="entry name" value="zinc finger protein 3 homolog"/>
    <property type="match status" value="1"/>
</dbReference>
<dbReference type="Gene3D" id="3.30.160.60">
    <property type="entry name" value="Classic Zinc Finger"/>
    <property type="match status" value="2"/>
</dbReference>
<dbReference type="InterPro" id="IPR050589">
    <property type="entry name" value="Ikaros_C2H2-ZF"/>
</dbReference>
<dbReference type="InterPro" id="IPR036236">
    <property type="entry name" value="Znf_C2H2_sf"/>
</dbReference>
<dbReference type="InterPro" id="IPR013087">
    <property type="entry name" value="Znf_C2H2_type"/>
</dbReference>
<dbReference type="PANTHER" id="PTHR24404:SF84">
    <property type="entry name" value="C2H2-TYPE DOMAIN-CONTAINING PROTEIN-RELATED"/>
    <property type="match status" value="1"/>
</dbReference>
<dbReference type="PANTHER" id="PTHR24404">
    <property type="entry name" value="ZINC FINGER PROTEIN"/>
    <property type="match status" value="1"/>
</dbReference>
<dbReference type="Pfam" id="PF00096">
    <property type="entry name" value="zf-C2H2"/>
    <property type="match status" value="2"/>
</dbReference>
<dbReference type="SMART" id="SM00355">
    <property type="entry name" value="ZnF_C2H2"/>
    <property type="match status" value="2"/>
</dbReference>
<dbReference type="SUPFAM" id="SSF57667">
    <property type="entry name" value="beta-beta-alpha zinc fingers"/>
    <property type="match status" value="1"/>
</dbReference>
<dbReference type="PROSITE" id="PS00028">
    <property type="entry name" value="ZINC_FINGER_C2H2_1"/>
    <property type="match status" value="2"/>
</dbReference>
<dbReference type="PROSITE" id="PS50157">
    <property type="entry name" value="ZINC_FINGER_C2H2_2"/>
    <property type="match status" value="2"/>
</dbReference>
<gene>
    <name evidence="3" type="primary">MSN2</name>
    <name type="ORF">AOL_s00076g216</name>
</gene>
<sequence length="502" mass="55118">MEAAGFLYYSPDPQGRQQKQHGHHGHFLAQPNAAYTISASPQLLAPTPIHFPSQLVLGGRGVPLTITPSASPSLMEPYRDMCSESATTDLLFNPATPPLTHSAVSTPSLSYAMPTPISNHGWSSEEPVIATVSLSDIHLPSTPADYFPPGLVAPSILKSNASPPPSISLNDLHCPALSPCSSQDSFNESDCCDPRELTIQSPTPVEIKPDILFPPMASLSGDDDQFLFGGNVESFLPLASKVTPYMAGDYNEELSDLGDSEDDFIQNFSESVFSNKRMRFDDDSENEQLPSPPMSTSSSRQGSVAPIKVLKRKLLKVKKEDTPEEMSEEQRLRSFKFGSIDSACSSEPSSPCSEKHSHMVGHPISPHVIRRGRKQSLTEDPSKTFVCHLCTRRFRRQEHLKRHFRSLHTEDKPFACGECGKKFSRSDNLTQHSRIHGTGAVVLGVLTEGEVPVLGSQFMEDESMHSPQPFIVVDSMTAASGEIKDKSSDDKKSRKKRKRSDE</sequence>
<proteinExistence type="predicted"/>
<keyword id="KW-0238">DNA-binding</keyword>
<keyword id="KW-0479">Metal-binding</keyword>
<keyword id="KW-0539">Nucleus</keyword>
<keyword id="KW-1185">Reference proteome</keyword>
<keyword id="KW-0677">Repeat</keyword>
<keyword id="KW-0804">Transcription</keyword>
<keyword id="KW-0805">Transcription regulation</keyword>
<keyword id="KW-0843">Virulence</keyword>
<keyword id="KW-0862">Zinc</keyword>
<keyword id="KW-0863">Zinc-finger</keyword>
<feature type="chain" id="PRO_0000462271" description="C2H2-type transcription factor MSN2">
    <location>
        <begin position="1"/>
        <end position="502"/>
    </location>
</feature>
<feature type="zinc finger region" description="C2H2-type 1" evidence="1">
    <location>
        <begin position="385"/>
        <end position="408"/>
    </location>
</feature>
<feature type="zinc finger region" description="C2H2-type 2" evidence="1">
    <location>
        <begin position="414"/>
        <end position="436"/>
    </location>
</feature>
<evidence type="ECO:0000255" key="1">
    <source>
        <dbReference type="PROSITE-ProRule" id="PRU00042"/>
    </source>
</evidence>
<evidence type="ECO:0000269" key="2">
    <source>
    </source>
</evidence>
<evidence type="ECO:0000303" key="3">
    <source>
    </source>
</evidence>
<evidence type="ECO:0000305" key="4"/>
<comment type="function">
    <text evidence="2">Key downstream transcription factor in the HOG1-MAPK pathway (PubMed:38331317). Plays crucial roles in the regulation of growth, conidiation, trap development and fatty acid metabolism (PubMed:38331317). Negatively regulates secondary metabolism such as arthrobotrisins biosynthesis (PubMed:38331317).Also regulates autophagy and endocytosis (PubMed:38331317).</text>
</comment>
<comment type="subcellular location">
    <subcellularLocation>
        <location evidence="4">Nucleus</location>
    </subcellularLocation>
</comment>
<comment type="disruption phenotype">
    <text evidence="2">Leads to significantly enlarged and swollen the hyphae, with an increase in septa and a significant decrease in nuclei (PubMed:38331317). Remarkably decreases spore yield, spore germination rate, traps, and nematode predation efficiency (PubMed:38331317). Increases the expression of the arthrobotrisins biosynthesis cluster (PubMed:38331317).</text>
</comment>
<name>MSN2_ARTOA</name>
<organism>
    <name type="scientific">Arthrobotrys oligospora (strain ATCC 24927 / CBS 115.81 / DSM 1491)</name>
    <name type="common">Nematode-trapping fungus</name>
    <name type="synonym">Didymozoophaga oligospora</name>
    <dbReference type="NCBI Taxonomy" id="756982"/>
    <lineage>
        <taxon>Eukaryota</taxon>
        <taxon>Fungi</taxon>
        <taxon>Dikarya</taxon>
        <taxon>Ascomycota</taxon>
        <taxon>Pezizomycotina</taxon>
        <taxon>Orbiliomycetes</taxon>
        <taxon>Orbiliales</taxon>
        <taxon>Orbiliaceae</taxon>
        <taxon>Orbilia</taxon>
        <taxon>Orbilia oligospora</taxon>
    </lineage>
</organism>
<accession>G1X9A9</accession>